<feature type="transit peptide" description="Mitochondrion" evidence="2">
    <location>
        <begin position="1"/>
        <end position="32"/>
    </location>
</feature>
<feature type="chain" id="PRO_0000256055" description="ATP-dependent RNA helicase MRH4, mitochondrial">
    <location>
        <begin position="33"/>
        <end position="658"/>
    </location>
</feature>
<feature type="domain" description="Helicase ATP-binding" evidence="3">
    <location>
        <begin position="233"/>
        <end position="449"/>
    </location>
</feature>
<feature type="domain" description="Helicase C-terminal" evidence="4">
    <location>
        <begin position="490"/>
        <end position="658"/>
    </location>
</feature>
<feature type="region of interest" description="Disordered" evidence="5">
    <location>
        <begin position="25"/>
        <end position="150"/>
    </location>
</feature>
<feature type="region of interest" description="Disordered" evidence="5">
    <location>
        <begin position="268"/>
        <end position="292"/>
    </location>
</feature>
<feature type="region of interest" description="Disordered" evidence="5">
    <location>
        <begin position="552"/>
        <end position="573"/>
    </location>
</feature>
<feature type="short sequence motif" description="Q motif">
    <location>
        <begin position="182"/>
        <end position="214"/>
    </location>
</feature>
<feature type="short sequence motif" description="DEAD box">
    <location>
        <begin position="396"/>
        <end position="399"/>
    </location>
</feature>
<feature type="compositionally biased region" description="Polar residues" evidence="5">
    <location>
        <begin position="25"/>
        <end position="37"/>
    </location>
</feature>
<feature type="compositionally biased region" description="Basic and acidic residues" evidence="5">
    <location>
        <begin position="125"/>
        <end position="150"/>
    </location>
</feature>
<feature type="compositionally biased region" description="Basic and acidic residues" evidence="5">
    <location>
        <begin position="279"/>
        <end position="292"/>
    </location>
</feature>
<feature type="compositionally biased region" description="Polar residues" evidence="5">
    <location>
        <begin position="552"/>
        <end position="562"/>
    </location>
</feature>
<feature type="binding site" evidence="3">
    <location>
        <begin position="246"/>
        <end position="253"/>
    </location>
    <ligand>
        <name>ATP</name>
        <dbReference type="ChEBI" id="CHEBI:30616"/>
    </ligand>
</feature>
<protein>
    <recommendedName>
        <fullName>ATP-dependent RNA helicase MRH4, mitochondrial</fullName>
        <ecNumber>3.6.4.13</ecNumber>
    </recommendedName>
</protein>
<reference key="1">
    <citation type="journal article" date="2007" name="Plant Cell">
        <title>Dothideomycete-plant interactions illuminated by genome sequencing and EST analysis of the wheat pathogen Stagonospora nodorum.</title>
        <authorList>
            <person name="Hane J.K."/>
            <person name="Lowe R.G.T."/>
            <person name="Solomon P.S."/>
            <person name="Tan K.-C."/>
            <person name="Schoch C.L."/>
            <person name="Spatafora J.W."/>
            <person name="Crous P.W."/>
            <person name="Kodira C.D."/>
            <person name="Birren B.W."/>
            <person name="Galagan J.E."/>
            <person name="Torriani S.F.F."/>
            <person name="McDonald B.A."/>
            <person name="Oliver R.P."/>
        </authorList>
    </citation>
    <scope>NUCLEOTIDE SEQUENCE [LARGE SCALE GENOMIC DNA]</scope>
    <source>
        <strain>SN15 / ATCC MYA-4574 / FGSC 10173</strain>
    </source>
</reference>
<proteinExistence type="inferred from homology"/>
<comment type="function">
    <text evidence="1">ATP-binding RNA helicase involved in mitochondrial RNA metabolism. Required for maintenance of mitochondrial DNA (By similarity).</text>
</comment>
<comment type="catalytic activity">
    <reaction>
        <text>ATP + H2O = ADP + phosphate + H(+)</text>
        <dbReference type="Rhea" id="RHEA:13065"/>
        <dbReference type="ChEBI" id="CHEBI:15377"/>
        <dbReference type="ChEBI" id="CHEBI:15378"/>
        <dbReference type="ChEBI" id="CHEBI:30616"/>
        <dbReference type="ChEBI" id="CHEBI:43474"/>
        <dbReference type="ChEBI" id="CHEBI:456216"/>
        <dbReference type="EC" id="3.6.4.13"/>
    </reaction>
</comment>
<comment type="subcellular location">
    <subcellularLocation>
        <location evidence="1">Mitochondrion</location>
    </subcellularLocation>
</comment>
<comment type="domain">
    <text>The Q motif is unique to and characteristic of the DEAD box family of RNA helicases and controls ATP binding and hydrolysis.</text>
</comment>
<comment type="similarity">
    <text evidence="6">Belongs to the DEAD box helicase family. MRH4 subfamily.</text>
</comment>
<comment type="sequence caution" evidence="6">
    <conflict type="erroneous gene model prediction">
        <sequence resource="EMBL-CDS" id="EAT78791"/>
    </conflict>
</comment>
<dbReference type="EC" id="3.6.4.13"/>
<dbReference type="EMBL" id="CH445352">
    <property type="protein sequence ID" value="EAT78791.2"/>
    <property type="status" value="ALT_SEQ"/>
    <property type="molecule type" value="Genomic_DNA"/>
</dbReference>
<dbReference type="RefSeq" id="XP_001803973.1">
    <property type="nucleotide sequence ID" value="XM_001803921.1"/>
</dbReference>
<dbReference type="SMR" id="Q0U397"/>
<dbReference type="FunCoup" id="Q0U397">
    <property type="interactions" value="97"/>
</dbReference>
<dbReference type="STRING" id="321614.Q0U397"/>
<dbReference type="GeneID" id="5980895"/>
<dbReference type="KEGG" id="pno:SNOG_13767"/>
<dbReference type="VEuPathDB" id="FungiDB:JI435_137670"/>
<dbReference type="eggNOG" id="KOG0335">
    <property type="taxonomic scope" value="Eukaryota"/>
</dbReference>
<dbReference type="InParanoid" id="Q0U397"/>
<dbReference type="Proteomes" id="UP000001055">
    <property type="component" value="Unassembled WGS sequence"/>
</dbReference>
<dbReference type="GO" id="GO:0005739">
    <property type="term" value="C:mitochondrion"/>
    <property type="evidence" value="ECO:0007669"/>
    <property type="project" value="UniProtKB-SubCell"/>
</dbReference>
<dbReference type="GO" id="GO:0005730">
    <property type="term" value="C:nucleolus"/>
    <property type="evidence" value="ECO:0000318"/>
    <property type="project" value="GO_Central"/>
</dbReference>
<dbReference type="GO" id="GO:0005524">
    <property type="term" value="F:ATP binding"/>
    <property type="evidence" value="ECO:0007669"/>
    <property type="project" value="UniProtKB-KW"/>
</dbReference>
<dbReference type="GO" id="GO:0016887">
    <property type="term" value="F:ATP hydrolysis activity"/>
    <property type="evidence" value="ECO:0007669"/>
    <property type="project" value="RHEA"/>
</dbReference>
<dbReference type="GO" id="GO:0003723">
    <property type="term" value="F:RNA binding"/>
    <property type="evidence" value="ECO:0007669"/>
    <property type="project" value="UniProtKB-KW"/>
</dbReference>
<dbReference type="GO" id="GO:0003724">
    <property type="term" value="F:RNA helicase activity"/>
    <property type="evidence" value="ECO:0007669"/>
    <property type="project" value="UniProtKB-EC"/>
</dbReference>
<dbReference type="GO" id="GO:0000463">
    <property type="term" value="P:maturation of LSU-rRNA from tricistronic rRNA transcript (SSU-rRNA, 5.8S rRNA, LSU-rRNA)"/>
    <property type="evidence" value="ECO:0000318"/>
    <property type="project" value="GO_Central"/>
</dbReference>
<dbReference type="CDD" id="cd17965">
    <property type="entry name" value="DEADc_MRH4"/>
    <property type="match status" value="1"/>
</dbReference>
<dbReference type="Gene3D" id="3.40.50.300">
    <property type="entry name" value="P-loop containing nucleotide triphosphate hydrolases"/>
    <property type="match status" value="2"/>
</dbReference>
<dbReference type="InterPro" id="IPR011545">
    <property type="entry name" value="DEAD/DEAH_box_helicase_dom"/>
</dbReference>
<dbReference type="InterPro" id="IPR014001">
    <property type="entry name" value="Helicase_ATP-bd"/>
</dbReference>
<dbReference type="InterPro" id="IPR001650">
    <property type="entry name" value="Helicase_C-like"/>
</dbReference>
<dbReference type="InterPro" id="IPR027417">
    <property type="entry name" value="P-loop_NTPase"/>
</dbReference>
<dbReference type="InterPro" id="IPR014014">
    <property type="entry name" value="RNA_helicase_DEAD_Q_motif"/>
</dbReference>
<dbReference type="PANTHER" id="PTHR47960">
    <property type="entry name" value="DEAD-BOX ATP-DEPENDENT RNA HELICASE 50"/>
    <property type="match status" value="1"/>
</dbReference>
<dbReference type="Pfam" id="PF00270">
    <property type="entry name" value="DEAD"/>
    <property type="match status" value="1"/>
</dbReference>
<dbReference type="Pfam" id="PF00271">
    <property type="entry name" value="Helicase_C"/>
    <property type="match status" value="1"/>
</dbReference>
<dbReference type="SMART" id="SM00487">
    <property type="entry name" value="DEXDc"/>
    <property type="match status" value="1"/>
</dbReference>
<dbReference type="SMART" id="SM00490">
    <property type="entry name" value="HELICc"/>
    <property type="match status" value="1"/>
</dbReference>
<dbReference type="SUPFAM" id="SSF52540">
    <property type="entry name" value="P-loop containing nucleoside triphosphate hydrolases"/>
    <property type="match status" value="1"/>
</dbReference>
<dbReference type="PROSITE" id="PS51192">
    <property type="entry name" value="HELICASE_ATP_BIND_1"/>
    <property type="match status" value="1"/>
</dbReference>
<dbReference type="PROSITE" id="PS51194">
    <property type="entry name" value="HELICASE_CTER"/>
    <property type="match status" value="1"/>
</dbReference>
<dbReference type="PROSITE" id="PS51195">
    <property type="entry name" value="Q_MOTIF"/>
    <property type="match status" value="1"/>
</dbReference>
<evidence type="ECO:0000250" key="1"/>
<evidence type="ECO:0000255" key="2"/>
<evidence type="ECO:0000255" key="3">
    <source>
        <dbReference type="PROSITE-ProRule" id="PRU00541"/>
    </source>
</evidence>
<evidence type="ECO:0000255" key="4">
    <source>
        <dbReference type="PROSITE-ProRule" id="PRU00542"/>
    </source>
</evidence>
<evidence type="ECO:0000256" key="5">
    <source>
        <dbReference type="SAM" id="MobiDB-lite"/>
    </source>
</evidence>
<evidence type="ECO:0000305" key="6"/>
<name>MRH4_PHANO</name>
<accession>Q0U397</accession>
<keyword id="KW-0067">ATP-binding</keyword>
<keyword id="KW-0347">Helicase</keyword>
<keyword id="KW-0378">Hydrolase</keyword>
<keyword id="KW-0496">Mitochondrion</keyword>
<keyword id="KW-0547">Nucleotide-binding</keyword>
<keyword id="KW-0694">RNA-binding</keyword>
<keyword id="KW-0809">Transit peptide</keyword>
<organism>
    <name type="scientific">Phaeosphaeria nodorum (strain SN15 / ATCC MYA-4574 / FGSC 10173)</name>
    <name type="common">Glume blotch fungus</name>
    <name type="synonym">Parastagonospora nodorum</name>
    <dbReference type="NCBI Taxonomy" id="321614"/>
    <lineage>
        <taxon>Eukaryota</taxon>
        <taxon>Fungi</taxon>
        <taxon>Dikarya</taxon>
        <taxon>Ascomycota</taxon>
        <taxon>Pezizomycotina</taxon>
        <taxon>Dothideomycetes</taxon>
        <taxon>Pleosporomycetidae</taxon>
        <taxon>Pleosporales</taxon>
        <taxon>Pleosporineae</taxon>
        <taxon>Phaeosphaeriaceae</taxon>
        <taxon>Parastagonospora</taxon>
    </lineage>
</organism>
<sequence>MLRQVTRACPFCEVRSLLGQAPRSLQPQTRLYTQVQREAQRERGSRDSNTPSRPRDRRTPETDAFPPSSDRGSRGRSPRGRDDRRPSRMILSDAVSRPPQSDQRPARRPQEPFGHLNRTRAPPSLERERERRESHFERPKRNDDGKRRTRAEPYHALKMQRSLHEVPYGNRTTIKRKMELYDSFDKMPLLDTVQAAIKDALPALEYRSPTPAQSVAVPALLGLEAKKRTKATSTKKGGPEAFLLAAETGSGKTLAYLLPTLDAIKKAEQQEKEDAEAQAQKDADEAAAKAQDKRTDIFAAEEPEVNKAVDPARPRAIILVPSAELVAQVGAVAKSLSHTVKFRAAPISAKMSATVIRNQLFNEKGVDVVISTPPLLASIAESNPNILARVTHLICDEADSLFDRSFKPSTTEILERATPSLKQLILCSATIPKYLDKYLADRFPDMNRLVTPNLHAIPRRVQLGVVDVNKDPYHGNKNLACADTIWQIGRSTGEYDPAEGKEAVPTKRILVFVNEREDTEKVAQYLMSKGIDALAFHRDTDPSRQAKTLASFTGSDTSTAIKSSPDAPPKPELASKRTLANTKVIVTTDLGSRGIDTVSVRHVILYDVPHTTIDFIHRLGRTGRMGRRGRGIVLLGPGDRADVVKEVREAMYRGEALI</sequence>
<gene>
    <name type="primary">MRH4</name>
    <name type="ORF">SNOG_13767</name>
</gene>